<evidence type="ECO:0000250" key="1"/>
<evidence type="ECO:0000255" key="2">
    <source>
        <dbReference type="PROSITE-ProRule" id="PRU00021"/>
    </source>
</evidence>
<evidence type="ECO:0000269" key="3">
    <source>
    </source>
</evidence>
<evidence type="ECO:0000269" key="4">
    <source>
    </source>
</evidence>
<evidence type="ECO:0000305" key="5"/>
<comment type="function">
    <text evidence="1">Contributes to protect fish blood from freezing at subzero sea water temperatures. Lowers the blood freezing point. Binds to nascent ice crystals and prevents further growth (By similarity).</text>
</comment>
<comment type="subcellular location">
    <subcellularLocation>
        <location evidence="3 4">Secreted</location>
    </subcellularLocation>
</comment>
<comment type="tissue specificity">
    <text evidence="3 4">Detected in blood serum (at protein level).</text>
</comment>
<comment type="similarity">
    <text evidence="5">Belongs to the type-III AFP family.</text>
</comment>
<protein>
    <recommendedName>
        <fullName>Ice-structuring protein SP1-C</fullName>
        <shortName>ISP SP1-C</shortName>
    </recommendedName>
    <alternativeName>
        <fullName>Antifreeze protein SP1-C</fullName>
    </alternativeName>
</protein>
<name>ANP1C_ZOAAM</name>
<organism>
    <name type="scientific">Zoarces americanus</name>
    <name type="common">Ocean pout</name>
    <name type="synonym">Macrozoarces americanus</name>
    <dbReference type="NCBI Taxonomy" id="8199"/>
    <lineage>
        <taxon>Eukaryota</taxon>
        <taxon>Metazoa</taxon>
        <taxon>Chordata</taxon>
        <taxon>Craniata</taxon>
        <taxon>Vertebrata</taxon>
        <taxon>Euteleostomi</taxon>
        <taxon>Actinopterygii</taxon>
        <taxon>Neopterygii</taxon>
        <taxon>Teleostei</taxon>
        <taxon>Neoteleostei</taxon>
        <taxon>Acanthomorphata</taxon>
        <taxon>Eupercaria</taxon>
        <taxon>Perciformes</taxon>
        <taxon>Cottioidei</taxon>
        <taxon>Zoarcales</taxon>
        <taxon>Zoarcidae</taxon>
        <taxon>Zoarcinae</taxon>
        <taxon>Zoarces</taxon>
    </lineage>
</organism>
<feature type="signal peptide" evidence="3">
    <location>
        <begin position="1"/>
        <end position="22"/>
    </location>
</feature>
<feature type="chain" id="PRO_0000001691" description="Ice-structuring protein SP1-C">
    <location>
        <begin position="23"/>
        <end position="87"/>
    </location>
</feature>
<feature type="domain" description="AFP-like" evidence="2">
    <location>
        <begin position="24"/>
        <end position="83"/>
    </location>
</feature>
<feature type="site" description="Important for ice-binding" evidence="1">
    <location>
        <position position="29"/>
    </location>
</feature>
<feature type="site" description="Important for ice-binding" evidence="1">
    <location>
        <position position="34"/>
    </location>
</feature>
<feature type="site" description="Important for ice-binding" evidence="1">
    <location>
        <position position="38"/>
    </location>
</feature>
<feature type="site" description="Important for ice-binding" evidence="1">
    <location>
        <position position="64"/>
    </location>
</feature>
<feature type="modified residue" description="Pyrrolidone carboxylic acid" evidence="4">
    <location>
        <position position="23"/>
    </location>
</feature>
<keyword id="KW-0047">Antifreeze protein</keyword>
<keyword id="KW-0903">Direct protein sequencing</keyword>
<keyword id="KW-0873">Pyrrolidone carboxylic acid</keyword>
<keyword id="KW-0964">Secreted</keyword>
<keyword id="KW-0732">Signal</keyword>
<reference key="1">
    <citation type="journal article" date="1985" name="J. Biol. Chem.">
        <title>Structure of an antifreeze polypeptide and its precursor from the ocean pout, Macrozoarces americanus.</title>
        <authorList>
            <person name="Li X.-M."/>
            <person name="Trinh K.-Y."/>
            <person name="Hew C.-L."/>
            <person name="Buettner B."/>
            <person name="Baenziger J."/>
            <person name="Davies P.L."/>
        </authorList>
    </citation>
    <scope>NUCLEOTIDE SEQUENCE [MRNA]</scope>
    <scope>PARTIAL PROTEIN SEQUENCE</scope>
    <scope>PYROGLUTAMATE FORMATION AT GLN-23</scope>
    <scope>SUBCELLULAR LOCATION</scope>
    <scope>TISSUE SPECIFICITY</scope>
</reference>
<reference key="2">
    <citation type="journal article" date="1988" name="J. Biol. Chem.">
        <title>Multiple genes provide the basis for antifreeze protein diversity and dosage in the ocean pout, Macrozoarces americanus.</title>
        <authorList>
            <person name="Hew C.-L."/>
            <person name="Wang N.-C."/>
            <person name="Joshi S."/>
            <person name="Fletcher G.L."/>
            <person name="Scott G.K."/>
            <person name="Hayes P.H."/>
            <person name="Buettner B."/>
            <person name="Davies P.L."/>
        </authorList>
    </citation>
    <scope>PROTEIN SEQUENCE OF 23-86</scope>
    <scope>SUBCELLULAR LOCATION</scope>
    <scope>TISSUE SPECIFICITY</scope>
</reference>
<accession>P07457</accession>
<accession>P19610</accession>
<sequence>MKSVILTGLLFVLLCVDHMTASQSVVATQLIPINTALTPAMMEGKVTNPIGIPFAEMSQIVGKQVNTPVAKGQTLMPNMVKTYVAGK</sequence>
<proteinExistence type="evidence at protein level"/>
<dbReference type="EMBL" id="M11790">
    <property type="protein sequence ID" value="AAA49347.1"/>
    <property type="molecule type" value="mRNA"/>
</dbReference>
<dbReference type="PIR" id="A24081">
    <property type="entry name" value="FDFICP"/>
</dbReference>
<dbReference type="SMR" id="P07457"/>
<dbReference type="GO" id="GO:0005576">
    <property type="term" value="C:extracellular region"/>
    <property type="evidence" value="ECO:0007669"/>
    <property type="project" value="UniProtKB-SubCell"/>
</dbReference>
<dbReference type="CDD" id="cd11617">
    <property type="entry name" value="Antifreeze_III"/>
    <property type="match status" value="1"/>
</dbReference>
<dbReference type="Gene3D" id="3.90.1210.10">
    <property type="entry name" value="Antifreeze-like/N-acetylneuraminic acid synthase C-terminal domain"/>
    <property type="match status" value="1"/>
</dbReference>
<dbReference type="InterPro" id="IPR006190">
    <property type="entry name" value="AFP_Neu5c_C"/>
</dbReference>
<dbReference type="InterPro" id="IPR036732">
    <property type="entry name" value="AFP_Neu5c_C_sf"/>
</dbReference>
<dbReference type="InterPro" id="IPR006013">
    <property type="entry name" value="Antifreeze_III"/>
</dbReference>
<dbReference type="InterPro" id="IPR013974">
    <property type="entry name" value="SAF"/>
</dbReference>
<dbReference type="Pfam" id="PF08666">
    <property type="entry name" value="SAF"/>
    <property type="match status" value="1"/>
</dbReference>
<dbReference type="PRINTS" id="PR00357">
    <property type="entry name" value="ANTIFREEZIII"/>
</dbReference>
<dbReference type="SMART" id="SM00858">
    <property type="entry name" value="SAF"/>
    <property type="match status" value="1"/>
</dbReference>
<dbReference type="SUPFAM" id="SSF51269">
    <property type="entry name" value="AFP III-like domain"/>
    <property type="match status" value="1"/>
</dbReference>
<dbReference type="PROSITE" id="PS50844">
    <property type="entry name" value="AFP_LIKE"/>
    <property type="match status" value="1"/>
</dbReference>